<protein>
    <recommendedName>
        <fullName evidence="1">RNA-binding protein Hfq</fullName>
    </recommendedName>
</protein>
<feature type="chain" id="PRO_1000190364" description="RNA-binding protein Hfq">
    <location>
        <begin position="1"/>
        <end position="86"/>
    </location>
</feature>
<feature type="domain" description="Sm" evidence="2">
    <location>
        <begin position="12"/>
        <end position="73"/>
    </location>
</feature>
<proteinExistence type="inferred from homology"/>
<sequence>MASSKAAINLQDIFLNQVRKEHVPVTVYLINGFQLKGLVKGFDNFTVVLESENKQQLLIYKHAISTITPQKPVIFSASDKDEKREE</sequence>
<gene>
    <name evidence="1" type="primary">hfq</name>
    <name type="ordered locus">Teth39_1177</name>
</gene>
<name>HFQ_THEP3</name>
<dbReference type="EMBL" id="CP000924">
    <property type="protein sequence ID" value="ABY94831.1"/>
    <property type="molecule type" value="Genomic_DNA"/>
</dbReference>
<dbReference type="RefSeq" id="WP_003866787.1">
    <property type="nucleotide sequence ID" value="NC_010321.1"/>
</dbReference>
<dbReference type="SMR" id="B0K9L8"/>
<dbReference type="STRING" id="340099.Teth39_1177"/>
<dbReference type="KEGG" id="tpd:Teth39_1177"/>
<dbReference type="eggNOG" id="COG1923">
    <property type="taxonomic scope" value="Bacteria"/>
</dbReference>
<dbReference type="HOGENOM" id="CLU_113688_0_2_9"/>
<dbReference type="Proteomes" id="UP000002156">
    <property type="component" value="Chromosome"/>
</dbReference>
<dbReference type="GO" id="GO:0005829">
    <property type="term" value="C:cytosol"/>
    <property type="evidence" value="ECO:0007669"/>
    <property type="project" value="TreeGrafter"/>
</dbReference>
<dbReference type="GO" id="GO:0003723">
    <property type="term" value="F:RNA binding"/>
    <property type="evidence" value="ECO:0007669"/>
    <property type="project" value="UniProtKB-UniRule"/>
</dbReference>
<dbReference type="GO" id="GO:0006355">
    <property type="term" value="P:regulation of DNA-templated transcription"/>
    <property type="evidence" value="ECO:0007669"/>
    <property type="project" value="InterPro"/>
</dbReference>
<dbReference type="GO" id="GO:0043487">
    <property type="term" value="P:regulation of RNA stability"/>
    <property type="evidence" value="ECO:0007669"/>
    <property type="project" value="TreeGrafter"/>
</dbReference>
<dbReference type="GO" id="GO:0045974">
    <property type="term" value="P:regulation of translation, ncRNA-mediated"/>
    <property type="evidence" value="ECO:0007669"/>
    <property type="project" value="TreeGrafter"/>
</dbReference>
<dbReference type="CDD" id="cd01716">
    <property type="entry name" value="Hfq"/>
    <property type="match status" value="1"/>
</dbReference>
<dbReference type="FunFam" id="2.30.30.100:FF:000012">
    <property type="entry name" value="RNA-binding protein Hfq"/>
    <property type="match status" value="1"/>
</dbReference>
<dbReference type="Gene3D" id="2.30.30.100">
    <property type="match status" value="1"/>
</dbReference>
<dbReference type="HAMAP" id="MF_00436">
    <property type="entry name" value="Hfq"/>
    <property type="match status" value="1"/>
</dbReference>
<dbReference type="InterPro" id="IPR005001">
    <property type="entry name" value="Hfq"/>
</dbReference>
<dbReference type="InterPro" id="IPR010920">
    <property type="entry name" value="LSM_dom_sf"/>
</dbReference>
<dbReference type="InterPro" id="IPR047575">
    <property type="entry name" value="Sm"/>
</dbReference>
<dbReference type="NCBIfam" id="TIGR02383">
    <property type="entry name" value="Hfq"/>
    <property type="match status" value="1"/>
</dbReference>
<dbReference type="NCBIfam" id="NF001602">
    <property type="entry name" value="PRK00395.1"/>
    <property type="match status" value="1"/>
</dbReference>
<dbReference type="PANTHER" id="PTHR34772">
    <property type="entry name" value="RNA-BINDING PROTEIN HFQ"/>
    <property type="match status" value="1"/>
</dbReference>
<dbReference type="PANTHER" id="PTHR34772:SF1">
    <property type="entry name" value="RNA-BINDING PROTEIN HFQ"/>
    <property type="match status" value="1"/>
</dbReference>
<dbReference type="Pfam" id="PF17209">
    <property type="entry name" value="Hfq"/>
    <property type="match status" value="1"/>
</dbReference>
<dbReference type="SUPFAM" id="SSF50182">
    <property type="entry name" value="Sm-like ribonucleoproteins"/>
    <property type="match status" value="1"/>
</dbReference>
<dbReference type="PROSITE" id="PS52002">
    <property type="entry name" value="SM"/>
    <property type="match status" value="1"/>
</dbReference>
<evidence type="ECO:0000255" key="1">
    <source>
        <dbReference type="HAMAP-Rule" id="MF_00436"/>
    </source>
</evidence>
<evidence type="ECO:0000255" key="2">
    <source>
        <dbReference type="PROSITE-ProRule" id="PRU01346"/>
    </source>
</evidence>
<accession>B0K9L8</accession>
<reference key="1">
    <citation type="submission" date="2008-01" db="EMBL/GenBank/DDBJ databases">
        <title>Complete sequence of Thermoanaerobacter pseudethanolicus 39E.</title>
        <authorList>
            <person name="Copeland A."/>
            <person name="Lucas S."/>
            <person name="Lapidus A."/>
            <person name="Barry K."/>
            <person name="Glavina del Rio T."/>
            <person name="Dalin E."/>
            <person name="Tice H."/>
            <person name="Pitluck S."/>
            <person name="Bruce D."/>
            <person name="Goodwin L."/>
            <person name="Saunders E."/>
            <person name="Brettin T."/>
            <person name="Detter J.C."/>
            <person name="Han C."/>
            <person name="Schmutz J."/>
            <person name="Larimer F."/>
            <person name="Land M."/>
            <person name="Hauser L."/>
            <person name="Kyrpides N."/>
            <person name="Lykidis A."/>
            <person name="Hemme C."/>
            <person name="Fields M.W."/>
            <person name="He Z."/>
            <person name="Zhou J."/>
            <person name="Richardson P."/>
        </authorList>
    </citation>
    <scope>NUCLEOTIDE SEQUENCE [LARGE SCALE GENOMIC DNA]</scope>
    <source>
        <strain>ATCC 33223 / DSM 2355 / 39E</strain>
    </source>
</reference>
<comment type="function">
    <text evidence="1">RNA chaperone that binds small regulatory RNA (sRNAs) and mRNAs to facilitate mRNA translational regulation in response to envelope stress, environmental stress and changes in metabolite concentrations. Also binds with high specificity to tRNAs.</text>
</comment>
<comment type="subunit">
    <text evidence="1">Homohexamer.</text>
</comment>
<comment type="similarity">
    <text evidence="1">Belongs to the Hfq family.</text>
</comment>
<keyword id="KW-1185">Reference proteome</keyword>
<keyword id="KW-0694">RNA-binding</keyword>
<keyword id="KW-0346">Stress response</keyword>
<organism>
    <name type="scientific">Thermoanaerobacter pseudethanolicus (strain ATCC 33223 / 39E)</name>
    <name type="common">Clostridium thermohydrosulfuricum</name>
    <dbReference type="NCBI Taxonomy" id="340099"/>
    <lineage>
        <taxon>Bacteria</taxon>
        <taxon>Bacillati</taxon>
        <taxon>Bacillota</taxon>
        <taxon>Clostridia</taxon>
        <taxon>Thermoanaerobacterales</taxon>
        <taxon>Thermoanaerobacteraceae</taxon>
        <taxon>Thermoanaerobacter</taxon>
    </lineage>
</organism>